<reference key="1">
    <citation type="journal article" date="2011" name="J. Bacteriol.">
        <title>Comparative genomics of 28 Salmonella enterica isolates: evidence for CRISPR-mediated adaptive sublineage evolution.</title>
        <authorList>
            <person name="Fricke W.F."/>
            <person name="Mammel M.K."/>
            <person name="McDermott P.F."/>
            <person name="Tartera C."/>
            <person name="White D.G."/>
            <person name="Leclerc J.E."/>
            <person name="Ravel J."/>
            <person name="Cebula T.A."/>
        </authorList>
    </citation>
    <scope>NUCLEOTIDE SEQUENCE [LARGE SCALE GENOMIC DNA]</scope>
    <source>
        <strain>CT_02021853</strain>
    </source>
</reference>
<keyword id="KW-0963">Cytoplasm</keyword>
<keyword id="KW-0489">Methyltransferase</keyword>
<keyword id="KW-0698">rRNA processing</keyword>
<keyword id="KW-0949">S-adenosyl-L-methionine</keyword>
<keyword id="KW-0808">Transferase</keyword>
<feature type="chain" id="PRO_1000188529" description="Ribosomal RNA large subunit methyltransferase F">
    <location>
        <begin position="1"/>
        <end position="308"/>
    </location>
</feature>
<evidence type="ECO:0000255" key="1">
    <source>
        <dbReference type="HAMAP-Rule" id="MF_01848"/>
    </source>
</evidence>
<organism>
    <name type="scientific">Salmonella dublin (strain CT_02021853)</name>
    <dbReference type="NCBI Taxonomy" id="439851"/>
    <lineage>
        <taxon>Bacteria</taxon>
        <taxon>Pseudomonadati</taxon>
        <taxon>Pseudomonadota</taxon>
        <taxon>Gammaproteobacteria</taxon>
        <taxon>Enterobacterales</taxon>
        <taxon>Enterobacteriaceae</taxon>
        <taxon>Salmonella</taxon>
    </lineage>
</organism>
<accession>B5FP91</accession>
<sequence length="308" mass="34310">MSAQKPGLHPRNRHQHRYDLAALCQTTPELTSFLIRTPAGEQSVDFANPQAVKALNKALLAHFYAVTHWDIPPGFLCPPVPGRADYIHHLADLLGETTGSIPAQATILDVGVGANCIYPLIGVHEYGWRFTGSEVSDAAMSSAQAIIQANTGLSRAIRLRRQKDPAAIFTGIIHKNEFYDATLCNPPFHDSAAAARAGSERKRRNLGQNKDDALNFGGQQQELWCEGGEVAFIKKMIAESQSFRRQVLWFTTLVSRGENLPPLYRALTEAGAVKVVKKEMAQGQKQSRFIAWTFMDDDQRRRFITRKR</sequence>
<comment type="function">
    <text evidence="1">Specifically methylates the adenine in position 1618 of 23S rRNA.</text>
</comment>
<comment type="catalytic activity">
    <reaction evidence="1">
        <text>adenosine(1618) in 23S rRNA + S-adenosyl-L-methionine = N(6)-methyladenosine(1618) in 23S rRNA + S-adenosyl-L-homocysteine + H(+)</text>
        <dbReference type="Rhea" id="RHEA:16497"/>
        <dbReference type="Rhea" id="RHEA-COMP:10229"/>
        <dbReference type="Rhea" id="RHEA-COMP:10231"/>
        <dbReference type="ChEBI" id="CHEBI:15378"/>
        <dbReference type="ChEBI" id="CHEBI:57856"/>
        <dbReference type="ChEBI" id="CHEBI:59789"/>
        <dbReference type="ChEBI" id="CHEBI:74411"/>
        <dbReference type="ChEBI" id="CHEBI:74449"/>
        <dbReference type="EC" id="2.1.1.181"/>
    </reaction>
</comment>
<comment type="subcellular location">
    <subcellularLocation>
        <location evidence="1">Cytoplasm</location>
    </subcellularLocation>
</comment>
<comment type="similarity">
    <text evidence="1">Belongs to the methyltransferase superfamily. METTL16/RlmF family.</text>
</comment>
<name>RLMF_SALDC</name>
<proteinExistence type="inferred from homology"/>
<protein>
    <recommendedName>
        <fullName evidence="1">Ribosomal RNA large subunit methyltransferase F</fullName>
        <ecNumber evidence="1">2.1.1.181</ecNumber>
    </recommendedName>
    <alternativeName>
        <fullName evidence="1">23S rRNA mA1618 methyltransferase</fullName>
    </alternativeName>
    <alternativeName>
        <fullName evidence="1">rRNA adenine N-6-methyltransferase</fullName>
    </alternativeName>
</protein>
<dbReference type="EC" id="2.1.1.181" evidence="1"/>
<dbReference type="EMBL" id="CP001144">
    <property type="protein sequence ID" value="ACH74698.1"/>
    <property type="molecule type" value="Genomic_DNA"/>
</dbReference>
<dbReference type="RefSeq" id="WP_001275962.1">
    <property type="nucleotide sequence ID" value="NC_011205.1"/>
</dbReference>
<dbReference type="SMR" id="B5FP91"/>
<dbReference type="KEGG" id="sed:SeD_A0921"/>
<dbReference type="HOGENOM" id="CLU_027534_3_0_6"/>
<dbReference type="Proteomes" id="UP000008322">
    <property type="component" value="Chromosome"/>
</dbReference>
<dbReference type="GO" id="GO:0005737">
    <property type="term" value="C:cytoplasm"/>
    <property type="evidence" value="ECO:0007669"/>
    <property type="project" value="UniProtKB-SubCell"/>
</dbReference>
<dbReference type="GO" id="GO:0052907">
    <property type="term" value="F:23S rRNA (adenine(1618)-N(6))-methyltransferase activity"/>
    <property type="evidence" value="ECO:0007669"/>
    <property type="project" value="UniProtKB-EC"/>
</dbReference>
<dbReference type="GO" id="GO:0070475">
    <property type="term" value="P:rRNA base methylation"/>
    <property type="evidence" value="ECO:0007669"/>
    <property type="project" value="TreeGrafter"/>
</dbReference>
<dbReference type="FunFam" id="3.40.50.150:FF:000045">
    <property type="entry name" value="Ribosomal RNA large subunit methyltransferase F"/>
    <property type="match status" value="1"/>
</dbReference>
<dbReference type="Gene3D" id="3.40.50.150">
    <property type="entry name" value="Vaccinia Virus protein VP39"/>
    <property type="match status" value="1"/>
</dbReference>
<dbReference type="HAMAP" id="MF_01848">
    <property type="entry name" value="23SrRNA_methyltr_F"/>
    <property type="match status" value="1"/>
</dbReference>
<dbReference type="InterPro" id="IPR010286">
    <property type="entry name" value="METTL16/RlmF"/>
</dbReference>
<dbReference type="InterPro" id="IPR016909">
    <property type="entry name" value="rRNA_lsu_MeTfrase_F"/>
</dbReference>
<dbReference type="InterPro" id="IPR029063">
    <property type="entry name" value="SAM-dependent_MTases_sf"/>
</dbReference>
<dbReference type="NCBIfam" id="NF008725">
    <property type="entry name" value="PRK11727.1"/>
    <property type="match status" value="1"/>
</dbReference>
<dbReference type="PANTHER" id="PTHR13393:SF0">
    <property type="entry name" value="RNA N6-ADENOSINE-METHYLTRANSFERASE METTL16"/>
    <property type="match status" value="1"/>
</dbReference>
<dbReference type="PANTHER" id="PTHR13393">
    <property type="entry name" value="SAM-DEPENDENT METHYLTRANSFERASE"/>
    <property type="match status" value="1"/>
</dbReference>
<dbReference type="Pfam" id="PF05971">
    <property type="entry name" value="Methyltransf_10"/>
    <property type="match status" value="1"/>
</dbReference>
<dbReference type="PIRSF" id="PIRSF029038">
    <property type="entry name" value="Mtase_YbiN_prd"/>
    <property type="match status" value="1"/>
</dbReference>
<dbReference type="SUPFAM" id="SSF53335">
    <property type="entry name" value="S-adenosyl-L-methionine-dependent methyltransferases"/>
    <property type="match status" value="1"/>
</dbReference>
<gene>
    <name evidence="1" type="primary">rlmF</name>
    <name type="ordered locus">SeD_A0921</name>
</gene>